<sequence length="114" mass="12432">MAGLKVRKGDTVQVIAGKDRGTKGKVIAAFPREQKLLVEGVNRVRRHTKVTATTRGSKTGGIITKEAPIHVSNVMVVCPECEKPTRLGRRQDVVDASTGKTRPVRICKRCGKEI</sequence>
<evidence type="ECO:0000255" key="1">
    <source>
        <dbReference type="HAMAP-Rule" id="MF_01326"/>
    </source>
</evidence>
<evidence type="ECO:0000305" key="2"/>
<accession>A0LRN1</accession>
<comment type="function">
    <text evidence="1">One of two assembly initiator proteins, it binds directly to the 5'-end of the 23S rRNA, where it nucleates assembly of the 50S subunit.</text>
</comment>
<comment type="function">
    <text evidence="1">One of the proteins that surrounds the polypeptide exit tunnel on the outside of the subunit.</text>
</comment>
<comment type="subunit">
    <text evidence="1">Part of the 50S ribosomal subunit.</text>
</comment>
<comment type="similarity">
    <text evidence="1">Belongs to the universal ribosomal protein uL24 family.</text>
</comment>
<protein>
    <recommendedName>
        <fullName evidence="1">Large ribosomal subunit protein uL24</fullName>
    </recommendedName>
    <alternativeName>
        <fullName evidence="2">50S ribosomal protein L24</fullName>
    </alternativeName>
</protein>
<dbReference type="EMBL" id="CP000481">
    <property type="protein sequence ID" value="ABK52091.1"/>
    <property type="molecule type" value="Genomic_DNA"/>
</dbReference>
<dbReference type="SMR" id="A0LRN1"/>
<dbReference type="FunCoup" id="A0LRN1">
    <property type="interactions" value="141"/>
</dbReference>
<dbReference type="STRING" id="351607.Acel_0317"/>
<dbReference type="KEGG" id="ace:Acel_0317"/>
<dbReference type="eggNOG" id="COG0198">
    <property type="taxonomic scope" value="Bacteria"/>
</dbReference>
<dbReference type="HOGENOM" id="CLU_093315_2_0_11"/>
<dbReference type="InParanoid" id="A0LRN1"/>
<dbReference type="OrthoDB" id="9807419at2"/>
<dbReference type="Proteomes" id="UP000008221">
    <property type="component" value="Chromosome"/>
</dbReference>
<dbReference type="GO" id="GO:1990904">
    <property type="term" value="C:ribonucleoprotein complex"/>
    <property type="evidence" value="ECO:0007669"/>
    <property type="project" value="UniProtKB-KW"/>
</dbReference>
<dbReference type="GO" id="GO:0005840">
    <property type="term" value="C:ribosome"/>
    <property type="evidence" value="ECO:0007669"/>
    <property type="project" value="UniProtKB-KW"/>
</dbReference>
<dbReference type="GO" id="GO:0019843">
    <property type="term" value="F:rRNA binding"/>
    <property type="evidence" value="ECO:0007669"/>
    <property type="project" value="UniProtKB-UniRule"/>
</dbReference>
<dbReference type="GO" id="GO:0003735">
    <property type="term" value="F:structural constituent of ribosome"/>
    <property type="evidence" value="ECO:0007669"/>
    <property type="project" value="InterPro"/>
</dbReference>
<dbReference type="GO" id="GO:0006412">
    <property type="term" value="P:translation"/>
    <property type="evidence" value="ECO:0007669"/>
    <property type="project" value="UniProtKB-UniRule"/>
</dbReference>
<dbReference type="CDD" id="cd06089">
    <property type="entry name" value="KOW_RPL26"/>
    <property type="match status" value="1"/>
</dbReference>
<dbReference type="Gene3D" id="2.30.30.30">
    <property type="match status" value="1"/>
</dbReference>
<dbReference type="HAMAP" id="MF_01326_B">
    <property type="entry name" value="Ribosomal_uL24_B"/>
    <property type="match status" value="1"/>
</dbReference>
<dbReference type="InterPro" id="IPR005824">
    <property type="entry name" value="KOW"/>
</dbReference>
<dbReference type="InterPro" id="IPR014722">
    <property type="entry name" value="Rib_uL2_dom2"/>
</dbReference>
<dbReference type="InterPro" id="IPR003256">
    <property type="entry name" value="Ribosomal_uL24"/>
</dbReference>
<dbReference type="InterPro" id="IPR005825">
    <property type="entry name" value="Ribosomal_uL24_CS"/>
</dbReference>
<dbReference type="InterPro" id="IPR041988">
    <property type="entry name" value="Ribosomal_uL24_KOW"/>
</dbReference>
<dbReference type="InterPro" id="IPR008991">
    <property type="entry name" value="Translation_prot_SH3-like_sf"/>
</dbReference>
<dbReference type="NCBIfam" id="TIGR01079">
    <property type="entry name" value="rplX_bact"/>
    <property type="match status" value="1"/>
</dbReference>
<dbReference type="PANTHER" id="PTHR12903">
    <property type="entry name" value="MITOCHONDRIAL RIBOSOMAL PROTEIN L24"/>
    <property type="match status" value="1"/>
</dbReference>
<dbReference type="Pfam" id="PF00467">
    <property type="entry name" value="KOW"/>
    <property type="match status" value="1"/>
</dbReference>
<dbReference type="Pfam" id="PF17136">
    <property type="entry name" value="ribosomal_L24"/>
    <property type="match status" value="1"/>
</dbReference>
<dbReference type="SMART" id="SM00739">
    <property type="entry name" value="KOW"/>
    <property type="match status" value="1"/>
</dbReference>
<dbReference type="SUPFAM" id="SSF50104">
    <property type="entry name" value="Translation proteins SH3-like domain"/>
    <property type="match status" value="1"/>
</dbReference>
<dbReference type="PROSITE" id="PS01108">
    <property type="entry name" value="RIBOSOMAL_L24"/>
    <property type="match status" value="1"/>
</dbReference>
<gene>
    <name evidence="1" type="primary">rplX</name>
    <name type="ordered locus">Acel_0317</name>
</gene>
<reference key="1">
    <citation type="journal article" date="2009" name="Genome Res.">
        <title>Complete genome of the cellulolytic thermophile Acidothermus cellulolyticus 11B provides insights into its ecophysiological and evolutionary adaptations.</title>
        <authorList>
            <person name="Barabote R.D."/>
            <person name="Xie G."/>
            <person name="Leu D.H."/>
            <person name="Normand P."/>
            <person name="Necsulea A."/>
            <person name="Daubin V."/>
            <person name="Medigue C."/>
            <person name="Adney W.S."/>
            <person name="Xu X.C."/>
            <person name="Lapidus A."/>
            <person name="Parales R.E."/>
            <person name="Detter C."/>
            <person name="Pujic P."/>
            <person name="Bruce D."/>
            <person name="Lavire C."/>
            <person name="Challacombe J.F."/>
            <person name="Brettin T.S."/>
            <person name="Berry A.M."/>
        </authorList>
    </citation>
    <scope>NUCLEOTIDE SEQUENCE [LARGE SCALE GENOMIC DNA]</scope>
    <source>
        <strain>ATCC 43068 / DSM 8971 / 11B</strain>
    </source>
</reference>
<name>RL24_ACIC1</name>
<organism>
    <name type="scientific">Acidothermus cellulolyticus (strain ATCC 43068 / DSM 8971 / 11B)</name>
    <dbReference type="NCBI Taxonomy" id="351607"/>
    <lineage>
        <taxon>Bacteria</taxon>
        <taxon>Bacillati</taxon>
        <taxon>Actinomycetota</taxon>
        <taxon>Actinomycetes</taxon>
        <taxon>Acidothermales</taxon>
        <taxon>Acidothermaceae</taxon>
        <taxon>Acidothermus</taxon>
    </lineage>
</organism>
<keyword id="KW-1185">Reference proteome</keyword>
<keyword id="KW-0687">Ribonucleoprotein</keyword>
<keyword id="KW-0689">Ribosomal protein</keyword>
<keyword id="KW-0694">RNA-binding</keyword>
<keyword id="KW-0699">rRNA-binding</keyword>
<feature type="chain" id="PRO_0000355642" description="Large ribosomal subunit protein uL24">
    <location>
        <begin position="1"/>
        <end position="114"/>
    </location>
</feature>
<proteinExistence type="inferred from homology"/>